<feature type="chain" id="PRO_0000331648" description="Ubiquitin carboxyl-terminal hydrolase 17-like protein 6">
    <location>
        <begin position="1"/>
        <end position="398"/>
    </location>
</feature>
<feature type="domain" description="USP">
    <location>
        <begin position="80"/>
        <end position="375"/>
    </location>
</feature>
<feature type="active site" description="Nucleophile">
    <location>
        <position position="89"/>
    </location>
</feature>
<feature type="active site" description="Proton acceptor" evidence="1 2">
    <location>
        <position position="334"/>
    </location>
</feature>
<feature type="mutagenesis site" description="Abolishes enzymatic activity." evidence="3">
    <original>C</original>
    <variation>S</variation>
    <location>
        <position position="89"/>
    </location>
</feature>
<feature type="sequence conflict" description="In Ref. 1; AAS59847." evidence="4" ref="1">
    <original>R</original>
    <variation>G</variation>
    <location>
        <position position="9"/>
    </location>
</feature>
<feature type="sequence conflict" description="In Ref. 1; AAS59847." evidence="4" ref="1">
    <original>S</original>
    <variation>P</variation>
    <location>
        <position position="23"/>
    </location>
</feature>
<feature type="sequence conflict" description="In Ref. 1; AAS59847." evidence="4" ref="1">
    <original>S</original>
    <variation>T</variation>
    <location>
        <position position="364"/>
    </location>
</feature>
<sequence length="398" mass="44690">MEDDSLYLRGEWQFNHFSKLTSSRPDAAFAEIQRTSLPEKSPLSCETRVDLCDDLAPVARQLAPREKLPLSSRRPAAVGAGLQNMGNTCYVNASLQCLTYTPPLANYMLSREHSQTCHRHKGCMLCTMQAHITRALHNPGHVIQPSQALAAGFHRGKQEDAHEFLMFTVDAMKKACLPGHKQVDHHSKDTTLIHQIFGGYWRSQIKCLHCHGISDTFDPYLDIALDIQAAQSVQQALEQLVKPEELNGENAYHCGVCLQRAPASKTLTLHTSAKVLILVLKRFSDVTGNKIAKNVQYPECLDMQPYMSQQNTGPLVYVLYAVLVHAGWSCHNGHYFSYVKAQEGQWYKMDDAEVTASSITSVLSQQAYVLFYIQKSEWERHSESVSRGREPRALGSED</sequence>
<dbReference type="EC" id="3.4.19.12"/>
<dbReference type="EMBL" id="AY533200">
    <property type="protein sequence ID" value="AAS59847.1"/>
    <property type="molecule type" value="mRNA"/>
</dbReference>
<dbReference type="EMBL" id="AC116655">
    <property type="status" value="NOT_ANNOTATED_CDS"/>
    <property type="molecule type" value="Genomic_DNA"/>
</dbReference>
<dbReference type="SMR" id="Q6QN14"/>
<dbReference type="FunCoup" id="Q6QN14">
    <property type="interactions" value="445"/>
</dbReference>
<dbReference type="MEROPS" id="C19.A82"/>
<dbReference type="MEROPS" id="C19.A87"/>
<dbReference type="BioMuta" id="HGNC:37179"/>
<dbReference type="DMDM" id="187663985"/>
<dbReference type="AGR" id="HGNC:37179"/>
<dbReference type="GeneCards" id="USP17L6P"/>
<dbReference type="HGNC" id="HGNC:37179">
    <property type="gene designation" value="USP17L6P"/>
</dbReference>
<dbReference type="neXtProt" id="NX_Q6QN14"/>
<dbReference type="InParanoid" id="Q6QN14"/>
<dbReference type="PAN-GO" id="Q6QN14">
    <property type="GO annotations" value="6 GO annotations based on evolutionary models"/>
</dbReference>
<dbReference type="PhylomeDB" id="Q6QN14"/>
<dbReference type="Pharos" id="Q6QN14">
    <property type="development level" value="Tbio"/>
</dbReference>
<dbReference type="PRO" id="PR:Q6QN14"/>
<dbReference type="Proteomes" id="UP000005640">
    <property type="component" value="Unplaced"/>
</dbReference>
<dbReference type="RNAct" id="Q6QN14">
    <property type="molecule type" value="protein"/>
</dbReference>
<dbReference type="GO" id="GO:0005737">
    <property type="term" value="C:cytoplasm"/>
    <property type="evidence" value="ECO:0000314"/>
    <property type="project" value="UniProtKB"/>
</dbReference>
<dbReference type="GO" id="GO:0005829">
    <property type="term" value="C:cytosol"/>
    <property type="evidence" value="ECO:0000318"/>
    <property type="project" value="GO_Central"/>
</dbReference>
<dbReference type="GO" id="GO:0005634">
    <property type="term" value="C:nucleus"/>
    <property type="evidence" value="ECO:0000314"/>
    <property type="project" value="UniProtKB"/>
</dbReference>
<dbReference type="GO" id="GO:0004843">
    <property type="term" value="F:cysteine-type deubiquitinase activity"/>
    <property type="evidence" value="ECO:0000314"/>
    <property type="project" value="UniProtKB"/>
</dbReference>
<dbReference type="GO" id="GO:0071947">
    <property type="term" value="P:protein deubiquitination involved in ubiquitin-dependent protein catabolic process"/>
    <property type="evidence" value="ECO:0000314"/>
    <property type="project" value="UniProtKB"/>
</dbReference>
<dbReference type="GO" id="GO:0042981">
    <property type="term" value="P:regulation of apoptotic process"/>
    <property type="evidence" value="ECO:0000318"/>
    <property type="project" value="GO_Central"/>
</dbReference>
<dbReference type="GO" id="GO:0031647">
    <property type="term" value="P:regulation of protein stability"/>
    <property type="evidence" value="ECO:0000318"/>
    <property type="project" value="GO_Central"/>
</dbReference>
<dbReference type="CDD" id="cd02661">
    <property type="entry name" value="Peptidase_C19E"/>
    <property type="match status" value="1"/>
</dbReference>
<dbReference type="FunFam" id="3.90.70.10:FF:000070">
    <property type="entry name" value="Ubiquitin carboxyl-terminal hydrolase 17-like protein 17"/>
    <property type="match status" value="1"/>
</dbReference>
<dbReference type="Gene3D" id="3.90.70.10">
    <property type="entry name" value="Cysteine proteinases"/>
    <property type="match status" value="1"/>
</dbReference>
<dbReference type="InterPro" id="IPR038765">
    <property type="entry name" value="Papain-like_cys_pep_sf"/>
</dbReference>
<dbReference type="InterPro" id="IPR050164">
    <property type="entry name" value="Peptidase_C19"/>
</dbReference>
<dbReference type="InterPro" id="IPR001394">
    <property type="entry name" value="Peptidase_C19_UCH"/>
</dbReference>
<dbReference type="InterPro" id="IPR018200">
    <property type="entry name" value="USP_CS"/>
</dbReference>
<dbReference type="InterPro" id="IPR028889">
    <property type="entry name" value="USP_dom"/>
</dbReference>
<dbReference type="PANTHER" id="PTHR24006:SF651">
    <property type="entry name" value="INACTIVE UBIQUITIN CARBOXYL-TERMINAL HYDROLASE 17-LIKE PROTEIN 4-RELATED"/>
    <property type="match status" value="1"/>
</dbReference>
<dbReference type="PANTHER" id="PTHR24006">
    <property type="entry name" value="UBIQUITIN CARBOXYL-TERMINAL HYDROLASE"/>
    <property type="match status" value="1"/>
</dbReference>
<dbReference type="Pfam" id="PF00443">
    <property type="entry name" value="UCH"/>
    <property type="match status" value="1"/>
</dbReference>
<dbReference type="SUPFAM" id="SSF54001">
    <property type="entry name" value="Cysteine proteinases"/>
    <property type="match status" value="1"/>
</dbReference>
<dbReference type="PROSITE" id="PS00972">
    <property type="entry name" value="USP_1"/>
    <property type="match status" value="1"/>
</dbReference>
<dbReference type="PROSITE" id="PS00973">
    <property type="entry name" value="USP_2"/>
    <property type="match status" value="1"/>
</dbReference>
<dbReference type="PROSITE" id="PS50235">
    <property type="entry name" value="USP_3"/>
    <property type="match status" value="1"/>
</dbReference>
<proteinExistence type="evidence at protein level"/>
<gene>
    <name type="primary">USP17L6P</name>
    <name type="synonym">USP17C</name>
    <name type="synonym">USP17D</name>
    <name type="synonym">USP17N</name>
</gene>
<reference key="1">
    <citation type="journal article" date="2006" name="BMC Genomics">
        <title>Hyaluronan- and RNA-binding deubiquitinating enzymes of USP17 family members associated with cell viability.</title>
        <authorList>
            <person name="Shin J.-M."/>
            <person name="Yoo K.-J."/>
            <person name="Kim M.-S."/>
            <person name="Kim D."/>
            <person name="Baek K.-H."/>
        </authorList>
    </citation>
    <scope>NUCLEOTIDE SEQUENCE [MRNA]</scope>
    <scope>NOMENCLATURE</scope>
    <scope>FUNCTION</scope>
    <scope>CATALYTIC ACTIVITY</scope>
    <scope>MUTAGENESIS OF CYS-89</scope>
    <scope>SUBCELLULAR LOCATION</scope>
</reference>
<reference key="2">
    <citation type="journal article" date="2005" name="Nature">
        <title>Generation and annotation of the DNA sequences of human chromosomes 2 and 4.</title>
        <authorList>
            <person name="Hillier L.W."/>
            <person name="Graves T.A."/>
            <person name="Fulton R.S."/>
            <person name="Fulton L.A."/>
            <person name="Pepin K.H."/>
            <person name="Minx P."/>
            <person name="Wagner-McPherson C."/>
            <person name="Layman D."/>
            <person name="Wylie K."/>
            <person name="Sekhon M."/>
            <person name="Becker M.C."/>
            <person name="Fewell G.A."/>
            <person name="Delehaunty K.D."/>
            <person name="Miner T.L."/>
            <person name="Nash W.E."/>
            <person name="Kremitzki C."/>
            <person name="Oddy L."/>
            <person name="Du H."/>
            <person name="Sun H."/>
            <person name="Bradshaw-Cordum H."/>
            <person name="Ali J."/>
            <person name="Carter J."/>
            <person name="Cordes M."/>
            <person name="Harris A."/>
            <person name="Isak A."/>
            <person name="van Brunt A."/>
            <person name="Nguyen C."/>
            <person name="Du F."/>
            <person name="Courtney L."/>
            <person name="Kalicki J."/>
            <person name="Ozersky P."/>
            <person name="Abbott S."/>
            <person name="Armstrong J."/>
            <person name="Belter E.A."/>
            <person name="Caruso L."/>
            <person name="Cedroni M."/>
            <person name="Cotton M."/>
            <person name="Davidson T."/>
            <person name="Desai A."/>
            <person name="Elliott G."/>
            <person name="Erb T."/>
            <person name="Fronick C."/>
            <person name="Gaige T."/>
            <person name="Haakenson W."/>
            <person name="Haglund K."/>
            <person name="Holmes A."/>
            <person name="Harkins R."/>
            <person name="Kim K."/>
            <person name="Kruchowski S.S."/>
            <person name="Strong C.M."/>
            <person name="Grewal N."/>
            <person name="Goyea E."/>
            <person name="Hou S."/>
            <person name="Levy A."/>
            <person name="Martinka S."/>
            <person name="Mead K."/>
            <person name="McLellan M.D."/>
            <person name="Meyer R."/>
            <person name="Randall-Maher J."/>
            <person name="Tomlinson C."/>
            <person name="Dauphin-Kohlberg S."/>
            <person name="Kozlowicz-Reilly A."/>
            <person name="Shah N."/>
            <person name="Swearengen-Shahid S."/>
            <person name="Snider J."/>
            <person name="Strong J.T."/>
            <person name="Thompson J."/>
            <person name="Yoakum M."/>
            <person name="Leonard S."/>
            <person name="Pearman C."/>
            <person name="Trani L."/>
            <person name="Radionenko M."/>
            <person name="Waligorski J.E."/>
            <person name="Wang C."/>
            <person name="Rock S.M."/>
            <person name="Tin-Wollam A.-M."/>
            <person name="Maupin R."/>
            <person name="Latreille P."/>
            <person name="Wendl M.C."/>
            <person name="Yang S.-P."/>
            <person name="Pohl C."/>
            <person name="Wallis J.W."/>
            <person name="Spieth J."/>
            <person name="Bieri T.A."/>
            <person name="Berkowicz N."/>
            <person name="Nelson J.O."/>
            <person name="Osborne J."/>
            <person name="Ding L."/>
            <person name="Meyer R."/>
            <person name="Sabo A."/>
            <person name="Shotland Y."/>
            <person name="Sinha P."/>
            <person name="Wohldmann P.E."/>
            <person name="Cook L.L."/>
            <person name="Hickenbotham M.T."/>
            <person name="Eldred J."/>
            <person name="Williams D."/>
            <person name="Jones T.A."/>
            <person name="She X."/>
            <person name="Ciccarelli F.D."/>
            <person name="Izaurralde E."/>
            <person name="Taylor J."/>
            <person name="Schmutz J."/>
            <person name="Myers R.M."/>
            <person name="Cox D.R."/>
            <person name="Huang X."/>
            <person name="McPherson J.D."/>
            <person name="Mardis E.R."/>
            <person name="Clifton S.W."/>
            <person name="Warren W.C."/>
            <person name="Chinwalla A.T."/>
            <person name="Eddy S.R."/>
            <person name="Marra M.A."/>
            <person name="Ovcharenko I."/>
            <person name="Furey T.S."/>
            <person name="Miller W."/>
            <person name="Eichler E.E."/>
            <person name="Bork P."/>
            <person name="Suyama M."/>
            <person name="Torrents D."/>
            <person name="Waterston R.H."/>
            <person name="Wilson R.K."/>
        </authorList>
    </citation>
    <scope>NUCLEOTIDE SEQUENCE [LARGE SCALE GENOMIC DNA]</scope>
</reference>
<reference key="3">
    <citation type="journal article" date="2005" name="Genomics">
        <title>The DUB/USP17 deubiquitinating enzymes, a multigene family within a tandemly repeated sequence.</title>
        <authorList>
            <person name="Burrows J.F."/>
            <person name="McGrattan M.J."/>
            <person name="Johnston J.A."/>
        </authorList>
    </citation>
    <scope>IDENTIFICATION</scope>
    <scope>NOMENCLATURE</scope>
</reference>
<accession>Q6QN14</accession>
<protein>
    <recommendedName>
        <fullName>Ubiquitin carboxyl-terminal hydrolase 17-like protein 6</fullName>
        <ecNumber>3.4.19.12</ecNumber>
    </recommendedName>
    <alternativeName>
        <fullName>Deubiquitinating enzyme 17-like protein 6</fullName>
    </alternativeName>
    <alternativeName>
        <fullName>Ubiquitin thioesterase 17-like protein 6</fullName>
    </alternativeName>
    <alternativeName>
        <fullName>Ubiquitin-specific-processing protease 17-like protein 6</fullName>
    </alternativeName>
</protein>
<name>U17L6_HUMAN</name>
<evidence type="ECO:0000255" key="1">
    <source>
        <dbReference type="PROSITE-ProRule" id="PRU10092"/>
    </source>
</evidence>
<evidence type="ECO:0000255" key="2">
    <source>
        <dbReference type="PROSITE-ProRule" id="PRU10093"/>
    </source>
</evidence>
<evidence type="ECO:0000269" key="3">
    <source>
    </source>
</evidence>
<evidence type="ECO:0000305" key="4"/>
<comment type="function">
    <text evidence="3">Deubiquitinating enzyme that removes conjugated ubiquitin from specific proteins to regulate different cellular processes that may include cell proliferation, progression through the cell cycle, cell migration, and the cellular response to viral infection. Seems to be non-functional in the regulation of apoptosis.</text>
</comment>
<comment type="catalytic activity">
    <reaction evidence="3">
        <text>Thiol-dependent hydrolysis of ester, thioester, amide, peptide and isopeptide bonds formed by the C-terminal Gly of ubiquitin (a 76-residue protein attached to proteins as an intracellular targeting signal).</text>
        <dbReference type="EC" id="3.4.19.12"/>
    </reaction>
</comment>
<comment type="subcellular location">
    <subcellularLocation>
        <location evidence="3">Nucleus</location>
    </subcellularLocation>
    <subcellularLocation>
        <location evidence="3">Cytoplasm</location>
    </subcellularLocation>
</comment>
<comment type="similarity">
    <text evidence="4">Belongs to the peptidase C19 family. USP17 subfamily.</text>
</comment>
<comment type="caution">
    <text evidence="4">The RS447 megasatellite DNA is a highly polymorphic conserved tandem repetitive sequence which contains a copy of the USP17 gene. It is present with an interindividual variation in copy number, ranging from 20 to 103, and can be found in the genome both on chromosome 4 and chromosome 8. The high similarity between the UPS17-like genes makes impossible to clearly assign data to one of the genes of the family. Oligonucleotides designed in RNAi experiments are for instance not specific of a given UPS17-like gene.</text>
</comment>
<keyword id="KW-0963">Cytoplasm</keyword>
<keyword id="KW-0378">Hydrolase</keyword>
<keyword id="KW-0539">Nucleus</keyword>
<keyword id="KW-0645">Protease</keyword>
<keyword id="KW-1185">Reference proteome</keyword>
<keyword id="KW-0788">Thiol protease</keyword>
<keyword id="KW-0833">Ubl conjugation pathway</keyword>
<organism>
    <name type="scientific">Homo sapiens</name>
    <name type="common">Human</name>
    <dbReference type="NCBI Taxonomy" id="9606"/>
    <lineage>
        <taxon>Eukaryota</taxon>
        <taxon>Metazoa</taxon>
        <taxon>Chordata</taxon>
        <taxon>Craniata</taxon>
        <taxon>Vertebrata</taxon>
        <taxon>Euteleostomi</taxon>
        <taxon>Mammalia</taxon>
        <taxon>Eutheria</taxon>
        <taxon>Euarchontoglires</taxon>
        <taxon>Primates</taxon>
        <taxon>Haplorrhini</taxon>
        <taxon>Catarrhini</taxon>
        <taxon>Hominidae</taxon>
        <taxon>Homo</taxon>
    </lineage>
</organism>